<sequence length="279" mass="31164">MAEEQGRGRHGPDPAPRPQKPPVEVLASSSGAEGPPLMRKRSSKREKGLRGSRKGPSSSGEQTPMQGPEAPGSSKNPSRTREGQEGPIPSASGLAPRRQSHRHRPGPQHDAAQRMYGPLLNRIFGKDRELGPEELDELQAAFEEFDTDHDGYIGYRDLGECMRTLGYMPTEMELIEVSQHVKMRMGGRVDFEEFVEMMGPKLREETAHMLGLRELRIAFREFDRDRDGRITVAELREAAPALLGEPLVGPELEEMLQEVDLNGDGTVDFNEFVMMLSRH</sequence>
<accession>Q8HZJ4</accession>
<protein>
    <recommendedName>
        <fullName>Calcium-binding protein 4</fullName>
        <shortName>CaBP4</shortName>
    </recommendedName>
</protein>
<evidence type="ECO:0000250" key="1"/>
<evidence type="ECO:0000250" key="2">
    <source>
        <dbReference type="UniProtKB" id="P57796"/>
    </source>
</evidence>
<evidence type="ECO:0000250" key="3">
    <source>
        <dbReference type="UniProtKB" id="Q8VHC5"/>
    </source>
</evidence>
<evidence type="ECO:0000255" key="4">
    <source>
        <dbReference type="PROSITE-ProRule" id="PRU00448"/>
    </source>
</evidence>
<evidence type="ECO:0000256" key="5">
    <source>
        <dbReference type="SAM" id="MobiDB-lite"/>
    </source>
</evidence>
<evidence type="ECO:0000269" key="6">
    <source>
    </source>
</evidence>
<comment type="function">
    <text evidence="1">May play a role in normal synaptic function, probably through regulation of Ca(2+) influx and neurotransmitter release in photoreceptor synaptic terminals and in auditory transmission. Modulator of CACNA1F, shifting the activation range to more hyperpolarized voltages (By similarity).</text>
</comment>
<comment type="subunit">
    <text evidence="1">Interacts with CACNA1F and CACNA1D (via IQ domain) in a calcium independent manner. Interacts (via N-terminus) with UNC119.</text>
</comment>
<comment type="subcellular location">
    <subcellularLocation>
        <location evidence="2">Cytoplasm</location>
    </subcellularLocation>
    <subcellularLocation>
        <location evidence="3">Presynapse</location>
    </subcellularLocation>
    <text evidence="3">Found in rod spherules and cone pedicles of the presynapses from both types of photoreceptors.</text>
</comment>
<comment type="tissue specificity">
    <text evidence="6">Expressed in the retina.</text>
</comment>
<comment type="PTM">
    <text evidence="1">Phosphorylated. Phosphorylation levels change with the light conditions and regulate the activity (By similarity).</text>
</comment>
<keyword id="KW-0106">Calcium</keyword>
<keyword id="KW-0966">Cell projection</keyword>
<keyword id="KW-0963">Cytoplasm</keyword>
<keyword id="KW-0479">Metal-binding</keyword>
<keyword id="KW-0597">Phosphoprotein</keyword>
<keyword id="KW-1185">Reference proteome</keyword>
<keyword id="KW-0677">Repeat</keyword>
<keyword id="KW-0770">Synapse</keyword>
<name>CABP4_BOVIN</name>
<gene>
    <name type="primary">CABP4</name>
</gene>
<proteinExistence type="evidence at transcript level"/>
<reference key="1">
    <citation type="journal article" date="2004" name="Nat. Neurosci.">
        <title>Essential role of Ca2+-binding protein 4, a Cav1.4 channel regulator, in photoreceptor synaptic function.</title>
        <authorList>
            <person name="Haeseleer F."/>
            <person name="Imanishi Y."/>
            <person name="Maeda T."/>
            <person name="Possin D.E."/>
            <person name="Maeda A."/>
            <person name="Lee A."/>
            <person name="Rieke F."/>
            <person name="Palczewski K."/>
        </authorList>
    </citation>
    <scope>NUCLEOTIDE SEQUENCE [MRNA]</scope>
    <scope>TISSUE SPECIFICITY</scope>
    <source>
        <tissue>Retina</tissue>
    </source>
</reference>
<organism>
    <name type="scientific">Bos taurus</name>
    <name type="common">Bovine</name>
    <dbReference type="NCBI Taxonomy" id="9913"/>
    <lineage>
        <taxon>Eukaryota</taxon>
        <taxon>Metazoa</taxon>
        <taxon>Chordata</taxon>
        <taxon>Craniata</taxon>
        <taxon>Vertebrata</taxon>
        <taxon>Euteleostomi</taxon>
        <taxon>Mammalia</taxon>
        <taxon>Eutheria</taxon>
        <taxon>Laurasiatheria</taxon>
        <taxon>Artiodactyla</taxon>
        <taxon>Ruminantia</taxon>
        <taxon>Pecora</taxon>
        <taxon>Bovidae</taxon>
        <taxon>Bovinae</taxon>
        <taxon>Bos</taxon>
    </lineage>
</organism>
<dbReference type="EMBL" id="AY048883">
    <property type="protein sequence ID" value="AAL05941.1"/>
    <property type="molecule type" value="mRNA"/>
</dbReference>
<dbReference type="RefSeq" id="NP_776681.1">
    <property type="nucleotide sequence ID" value="NM_174256.3"/>
</dbReference>
<dbReference type="SMR" id="Q8HZJ4"/>
<dbReference type="FunCoup" id="Q8HZJ4">
    <property type="interactions" value="14"/>
</dbReference>
<dbReference type="STRING" id="9913.ENSBTAP00000006283"/>
<dbReference type="PaxDb" id="9913-ENSBTAP00000006283"/>
<dbReference type="Ensembl" id="ENSBTAT00000006283.6">
    <property type="protein sequence ID" value="ENSBTAP00000006283.5"/>
    <property type="gene ID" value="ENSBTAG00000004785.7"/>
</dbReference>
<dbReference type="GeneID" id="281656"/>
<dbReference type="KEGG" id="bta:281656"/>
<dbReference type="CTD" id="57010"/>
<dbReference type="VEuPathDB" id="HostDB:ENSBTAG00000004785"/>
<dbReference type="VGNC" id="VGNC:26666">
    <property type="gene designation" value="CABP4"/>
</dbReference>
<dbReference type="eggNOG" id="KOG0027">
    <property type="taxonomic scope" value="Eukaryota"/>
</dbReference>
<dbReference type="GeneTree" id="ENSGT00940000161468"/>
<dbReference type="HOGENOM" id="CLU_061288_8_1_1"/>
<dbReference type="InParanoid" id="Q8HZJ4"/>
<dbReference type="OMA" id="EQTPIQG"/>
<dbReference type="OrthoDB" id="26525at2759"/>
<dbReference type="TreeFam" id="TF334804"/>
<dbReference type="Proteomes" id="UP000009136">
    <property type="component" value="Chromosome 29"/>
</dbReference>
<dbReference type="Bgee" id="ENSBTAG00000004785">
    <property type="expression patterns" value="Expressed in retina and 10 other cell types or tissues"/>
</dbReference>
<dbReference type="GO" id="GO:0042995">
    <property type="term" value="C:cell projection"/>
    <property type="evidence" value="ECO:0007669"/>
    <property type="project" value="UniProtKB-KW"/>
</dbReference>
<dbReference type="GO" id="GO:0005737">
    <property type="term" value="C:cytoplasm"/>
    <property type="evidence" value="ECO:0000318"/>
    <property type="project" value="GO_Central"/>
</dbReference>
<dbReference type="GO" id="GO:0005829">
    <property type="term" value="C:cytosol"/>
    <property type="evidence" value="ECO:0007669"/>
    <property type="project" value="Ensembl"/>
</dbReference>
<dbReference type="GO" id="GO:0098793">
    <property type="term" value="C:presynapse"/>
    <property type="evidence" value="ECO:0007669"/>
    <property type="project" value="UniProtKB-SubCell"/>
</dbReference>
<dbReference type="GO" id="GO:0005246">
    <property type="term" value="F:calcium channel regulator activity"/>
    <property type="evidence" value="ECO:0000318"/>
    <property type="project" value="GO_Central"/>
</dbReference>
<dbReference type="GO" id="GO:0005509">
    <property type="term" value="F:calcium ion binding"/>
    <property type="evidence" value="ECO:0007669"/>
    <property type="project" value="InterPro"/>
</dbReference>
<dbReference type="GO" id="GO:0044325">
    <property type="term" value="F:transmembrane transporter binding"/>
    <property type="evidence" value="ECO:0007669"/>
    <property type="project" value="Ensembl"/>
</dbReference>
<dbReference type="GO" id="GO:0008594">
    <property type="term" value="P:photoreceptor cell morphogenesis"/>
    <property type="evidence" value="ECO:0007669"/>
    <property type="project" value="Ensembl"/>
</dbReference>
<dbReference type="GO" id="GO:0007602">
    <property type="term" value="P:phototransduction"/>
    <property type="evidence" value="ECO:0007669"/>
    <property type="project" value="Ensembl"/>
</dbReference>
<dbReference type="GO" id="GO:0060040">
    <property type="term" value="P:retinal bipolar neuron differentiation"/>
    <property type="evidence" value="ECO:0007669"/>
    <property type="project" value="Ensembl"/>
</dbReference>
<dbReference type="GO" id="GO:0046549">
    <property type="term" value="P:retinal cone cell development"/>
    <property type="evidence" value="ECO:0007669"/>
    <property type="project" value="Ensembl"/>
</dbReference>
<dbReference type="GO" id="GO:0007601">
    <property type="term" value="P:visual perception"/>
    <property type="evidence" value="ECO:0000318"/>
    <property type="project" value="GO_Central"/>
</dbReference>
<dbReference type="CDD" id="cd00051">
    <property type="entry name" value="EFh"/>
    <property type="match status" value="1"/>
</dbReference>
<dbReference type="FunFam" id="1.10.238.10:FF:000037">
    <property type="entry name" value="calcium-binding protein 1 isoform X2"/>
    <property type="match status" value="1"/>
</dbReference>
<dbReference type="FunFam" id="1.10.238.10:FF:000265">
    <property type="entry name" value="calcium-binding protein 4"/>
    <property type="match status" value="1"/>
</dbReference>
<dbReference type="Gene3D" id="1.10.238.10">
    <property type="entry name" value="EF-hand"/>
    <property type="match status" value="2"/>
</dbReference>
<dbReference type="InterPro" id="IPR043582">
    <property type="entry name" value="CaBP1/2/4/5"/>
</dbReference>
<dbReference type="InterPro" id="IPR011992">
    <property type="entry name" value="EF-hand-dom_pair"/>
</dbReference>
<dbReference type="InterPro" id="IPR018247">
    <property type="entry name" value="EF_Hand_1_Ca_BS"/>
</dbReference>
<dbReference type="InterPro" id="IPR002048">
    <property type="entry name" value="EF_hand_dom"/>
</dbReference>
<dbReference type="PANTHER" id="PTHR45917">
    <property type="entry name" value="CALCIUM-BINDING PROTEIN 1-RELATED"/>
    <property type="match status" value="1"/>
</dbReference>
<dbReference type="PANTHER" id="PTHR45917:SF4">
    <property type="entry name" value="CALCIUM-BINDING PROTEIN 4"/>
    <property type="match status" value="1"/>
</dbReference>
<dbReference type="Pfam" id="PF13499">
    <property type="entry name" value="EF-hand_7"/>
    <property type="match status" value="2"/>
</dbReference>
<dbReference type="SMART" id="SM00054">
    <property type="entry name" value="EFh"/>
    <property type="match status" value="3"/>
</dbReference>
<dbReference type="SUPFAM" id="SSF47473">
    <property type="entry name" value="EF-hand"/>
    <property type="match status" value="1"/>
</dbReference>
<dbReference type="PROSITE" id="PS00018">
    <property type="entry name" value="EF_HAND_1"/>
    <property type="match status" value="3"/>
</dbReference>
<dbReference type="PROSITE" id="PS50222">
    <property type="entry name" value="EF_HAND_2"/>
    <property type="match status" value="4"/>
</dbReference>
<feature type="chain" id="PRO_0000073520" description="Calcium-binding protein 4">
    <location>
        <begin position="1"/>
        <end position="279"/>
    </location>
</feature>
<feature type="domain" description="EF-hand 1" evidence="4">
    <location>
        <begin position="133"/>
        <end position="168"/>
    </location>
</feature>
<feature type="domain" description="EF-hand 2" evidence="4">
    <location>
        <begin position="187"/>
        <end position="204"/>
    </location>
</feature>
<feature type="domain" description="EF-hand 3" evidence="4">
    <location>
        <begin position="210"/>
        <end position="245"/>
    </location>
</feature>
<feature type="domain" description="EF-hand 4" evidence="4">
    <location>
        <begin position="247"/>
        <end position="279"/>
    </location>
</feature>
<feature type="region of interest" description="Disordered" evidence="5">
    <location>
        <begin position="1"/>
        <end position="114"/>
    </location>
</feature>
<feature type="compositionally biased region" description="Basic and acidic residues" evidence="5">
    <location>
        <begin position="1"/>
        <end position="12"/>
    </location>
</feature>
<feature type="compositionally biased region" description="Polar residues" evidence="5">
    <location>
        <begin position="55"/>
        <end position="65"/>
    </location>
</feature>
<feature type="binding site" evidence="4">
    <location>
        <position position="146"/>
    </location>
    <ligand>
        <name>Ca(2+)</name>
        <dbReference type="ChEBI" id="CHEBI:29108"/>
        <label>1</label>
    </ligand>
</feature>
<feature type="binding site" evidence="4">
    <location>
        <position position="148"/>
    </location>
    <ligand>
        <name>Ca(2+)</name>
        <dbReference type="ChEBI" id="CHEBI:29108"/>
        <label>1</label>
    </ligand>
</feature>
<feature type="binding site" evidence="4">
    <location>
        <position position="150"/>
    </location>
    <ligand>
        <name>Ca(2+)</name>
        <dbReference type="ChEBI" id="CHEBI:29108"/>
        <label>1</label>
    </ligand>
</feature>
<feature type="binding site" evidence="4">
    <location>
        <position position="152"/>
    </location>
    <ligand>
        <name>Ca(2+)</name>
        <dbReference type="ChEBI" id="CHEBI:29108"/>
        <label>1</label>
    </ligand>
</feature>
<feature type="binding site" evidence="4">
    <location>
        <position position="157"/>
    </location>
    <ligand>
        <name>Ca(2+)</name>
        <dbReference type="ChEBI" id="CHEBI:29108"/>
        <label>1</label>
    </ligand>
</feature>
<feature type="binding site" evidence="4">
    <location>
        <position position="223"/>
    </location>
    <ligand>
        <name>Ca(2+)</name>
        <dbReference type="ChEBI" id="CHEBI:29108"/>
        <label>2</label>
    </ligand>
</feature>
<feature type="binding site" evidence="4">
    <location>
        <position position="225"/>
    </location>
    <ligand>
        <name>Ca(2+)</name>
        <dbReference type="ChEBI" id="CHEBI:29108"/>
        <label>2</label>
    </ligand>
</feature>
<feature type="binding site" evidence="4">
    <location>
        <position position="227"/>
    </location>
    <ligand>
        <name>Ca(2+)</name>
        <dbReference type="ChEBI" id="CHEBI:29108"/>
        <label>2</label>
    </ligand>
</feature>
<feature type="binding site" evidence="4">
    <location>
        <position position="229"/>
    </location>
    <ligand>
        <name>Ca(2+)</name>
        <dbReference type="ChEBI" id="CHEBI:29108"/>
        <label>2</label>
    </ligand>
</feature>
<feature type="binding site" evidence="4">
    <location>
        <position position="234"/>
    </location>
    <ligand>
        <name>Ca(2+)</name>
        <dbReference type="ChEBI" id="CHEBI:29108"/>
        <label>2</label>
    </ligand>
</feature>
<feature type="binding site" evidence="4">
    <location>
        <position position="260"/>
    </location>
    <ligand>
        <name>Ca(2+)</name>
        <dbReference type="ChEBI" id="CHEBI:29108"/>
        <label>3</label>
    </ligand>
</feature>
<feature type="binding site" evidence="4">
    <location>
        <position position="262"/>
    </location>
    <ligand>
        <name>Ca(2+)</name>
        <dbReference type="ChEBI" id="CHEBI:29108"/>
        <label>3</label>
    </ligand>
</feature>
<feature type="binding site" evidence="4">
    <location>
        <position position="264"/>
    </location>
    <ligand>
        <name>Ca(2+)</name>
        <dbReference type="ChEBI" id="CHEBI:29108"/>
        <label>3</label>
    </ligand>
</feature>
<feature type="binding site" evidence="4">
    <location>
        <position position="266"/>
    </location>
    <ligand>
        <name>Ca(2+)</name>
        <dbReference type="ChEBI" id="CHEBI:29108"/>
        <label>3</label>
    </ligand>
</feature>
<feature type="binding site" evidence="4">
    <location>
        <position position="271"/>
    </location>
    <ligand>
        <name>Ca(2+)</name>
        <dbReference type="ChEBI" id="CHEBI:29108"/>
        <label>3</label>
    </ligand>
</feature>
<feature type="modified residue" description="Phosphoserine" evidence="3">
    <location>
        <position position="42"/>
    </location>
</feature>